<protein>
    <recommendedName>
        <fullName evidence="1">7-cyano-7-deazaguanine synthase</fullName>
        <ecNumber evidence="1">6.3.4.20</ecNumber>
    </recommendedName>
    <alternativeName>
        <fullName evidence="1">7-cyano-7-carbaguanine synthase</fullName>
    </alternativeName>
    <alternativeName>
        <fullName evidence="1">PreQ(0) synthase</fullName>
    </alternativeName>
    <alternativeName>
        <fullName evidence="1">Queuosine biosynthesis protein QueC</fullName>
    </alternativeName>
</protein>
<dbReference type="EC" id="6.3.4.20" evidence="1"/>
<dbReference type="EMBL" id="AM933173">
    <property type="protein sequence ID" value="CAR36365.1"/>
    <property type="molecule type" value="Genomic_DNA"/>
</dbReference>
<dbReference type="RefSeq" id="WP_000817207.1">
    <property type="nucleotide sequence ID" value="NC_011274.1"/>
</dbReference>
<dbReference type="SMR" id="B5R6V6"/>
<dbReference type="KEGG" id="seg:SG0466"/>
<dbReference type="HOGENOM" id="CLU_081854_0_0_6"/>
<dbReference type="UniPathway" id="UPA00391"/>
<dbReference type="Proteomes" id="UP000008321">
    <property type="component" value="Chromosome"/>
</dbReference>
<dbReference type="GO" id="GO:0005524">
    <property type="term" value="F:ATP binding"/>
    <property type="evidence" value="ECO:0007669"/>
    <property type="project" value="UniProtKB-UniRule"/>
</dbReference>
<dbReference type="GO" id="GO:0016879">
    <property type="term" value="F:ligase activity, forming carbon-nitrogen bonds"/>
    <property type="evidence" value="ECO:0007669"/>
    <property type="project" value="UniProtKB-UniRule"/>
</dbReference>
<dbReference type="GO" id="GO:0008270">
    <property type="term" value="F:zinc ion binding"/>
    <property type="evidence" value="ECO:0007669"/>
    <property type="project" value="UniProtKB-UniRule"/>
</dbReference>
<dbReference type="GO" id="GO:0008616">
    <property type="term" value="P:queuosine biosynthetic process"/>
    <property type="evidence" value="ECO:0007669"/>
    <property type="project" value="UniProtKB-UniRule"/>
</dbReference>
<dbReference type="CDD" id="cd01995">
    <property type="entry name" value="QueC-like"/>
    <property type="match status" value="1"/>
</dbReference>
<dbReference type="FunFam" id="3.40.50.620:FF:000017">
    <property type="entry name" value="7-cyano-7-deazaguanine synthase"/>
    <property type="match status" value="1"/>
</dbReference>
<dbReference type="Gene3D" id="3.40.50.620">
    <property type="entry name" value="HUPs"/>
    <property type="match status" value="1"/>
</dbReference>
<dbReference type="HAMAP" id="MF_01633">
    <property type="entry name" value="QueC"/>
    <property type="match status" value="1"/>
</dbReference>
<dbReference type="InterPro" id="IPR018317">
    <property type="entry name" value="QueC"/>
</dbReference>
<dbReference type="InterPro" id="IPR014729">
    <property type="entry name" value="Rossmann-like_a/b/a_fold"/>
</dbReference>
<dbReference type="NCBIfam" id="TIGR00364">
    <property type="entry name" value="7-cyano-7-deazaguanine synthase QueC"/>
    <property type="match status" value="1"/>
</dbReference>
<dbReference type="NCBIfam" id="NF008317">
    <property type="entry name" value="PRK11106.1"/>
    <property type="match status" value="1"/>
</dbReference>
<dbReference type="PANTHER" id="PTHR42914">
    <property type="entry name" value="7-CYANO-7-DEAZAGUANINE SYNTHASE"/>
    <property type="match status" value="1"/>
</dbReference>
<dbReference type="PANTHER" id="PTHR42914:SF1">
    <property type="entry name" value="7-CYANO-7-DEAZAGUANINE SYNTHASE"/>
    <property type="match status" value="1"/>
</dbReference>
<dbReference type="Pfam" id="PF06508">
    <property type="entry name" value="QueC"/>
    <property type="match status" value="1"/>
</dbReference>
<dbReference type="PIRSF" id="PIRSF006293">
    <property type="entry name" value="ExsB"/>
    <property type="match status" value="1"/>
</dbReference>
<dbReference type="SUPFAM" id="SSF52402">
    <property type="entry name" value="Adenine nucleotide alpha hydrolases-like"/>
    <property type="match status" value="1"/>
</dbReference>
<reference key="1">
    <citation type="journal article" date="2008" name="Genome Res.">
        <title>Comparative genome analysis of Salmonella enteritidis PT4 and Salmonella gallinarum 287/91 provides insights into evolutionary and host adaptation pathways.</title>
        <authorList>
            <person name="Thomson N.R."/>
            <person name="Clayton D.J."/>
            <person name="Windhorst D."/>
            <person name="Vernikos G."/>
            <person name="Davidson S."/>
            <person name="Churcher C."/>
            <person name="Quail M.A."/>
            <person name="Stevens M."/>
            <person name="Jones M.A."/>
            <person name="Watson M."/>
            <person name="Barron A."/>
            <person name="Layton A."/>
            <person name="Pickard D."/>
            <person name="Kingsley R.A."/>
            <person name="Bignell A."/>
            <person name="Clark L."/>
            <person name="Harris B."/>
            <person name="Ormond D."/>
            <person name="Abdellah Z."/>
            <person name="Brooks K."/>
            <person name="Cherevach I."/>
            <person name="Chillingworth T."/>
            <person name="Woodward J."/>
            <person name="Norberczak H."/>
            <person name="Lord A."/>
            <person name="Arrowsmith C."/>
            <person name="Jagels K."/>
            <person name="Moule S."/>
            <person name="Mungall K."/>
            <person name="Saunders M."/>
            <person name="Whitehead S."/>
            <person name="Chabalgoity J.A."/>
            <person name="Maskell D."/>
            <person name="Humphreys T."/>
            <person name="Roberts M."/>
            <person name="Barrow P.A."/>
            <person name="Dougan G."/>
            <person name="Parkhill J."/>
        </authorList>
    </citation>
    <scope>NUCLEOTIDE SEQUENCE [LARGE SCALE GENOMIC DNA]</scope>
    <source>
        <strain>287/91 / NCTC 13346</strain>
    </source>
</reference>
<gene>
    <name evidence="1" type="primary">queC</name>
    <name type="ordered locus">SG0466</name>
</gene>
<proteinExistence type="inferred from homology"/>
<comment type="function">
    <text evidence="1">Catalyzes the ATP-dependent conversion of 7-carboxy-7-deazaguanine (CDG) to 7-cyano-7-deazaguanine (preQ(0)).</text>
</comment>
<comment type="catalytic activity">
    <reaction evidence="1">
        <text>7-carboxy-7-deazaguanine + NH4(+) + ATP = 7-cyano-7-deazaguanine + ADP + phosphate + H2O + H(+)</text>
        <dbReference type="Rhea" id="RHEA:27982"/>
        <dbReference type="ChEBI" id="CHEBI:15377"/>
        <dbReference type="ChEBI" id="CHEBI:15378"/>
        <dbReference type="ChEBI" id="CHEBI:28938"/>
        <dbReference type="ChEBI" id="CHEBI:30616"/>
        <dbReference type="ChEBI" id="CHEBI:43474"/>
        <dbReference type="ChEBI" id="CHEBI:45075"/>
        <dbReference type="ChEBI" id="CHEBI:61036"/>
        <dbReference type="ChEBI" id="CHEBI:456216"/>
        <dbReference type="EC" id="6.3.4.20"/>
    </reaction>
</comment>
<comment type="cofactor">
    <cofactor evidence="1">
        <name>Zn(2+)</name>
        <dbReference type="ChEBI" id="CHEBI:29105"/>
    </cofactor>
    <text evidence="1">Binds 1 zinc ion per subunit.</text>
</comment>
<comment type="pathway">
    <text evidence="1">Purine metabolism; 7-cyano-7-deazaguanine biosynthesis.</text>
</comment>
<comment type="similarity">
    <text evidence="1">Belongs to the QueC family.</text>
</comment>
<sequence length="231" mass="25485">MKRAVVVFSGGQDSTTCLAQARHQYDEVHCVTFDYGQRHRAEIDVARALALKLGTRAHKVLDVTLLNELAVSSLTRDSIPVPDYEPNADGIPNTFVPGRNILFLTLAAIYAYQVKAEAVITGVCETDFSGYPDCRDEFVKALNHAVNLGMAKDIRFETPLMWIDKAETWALADYWGQLDLVREETLTCYNGIKGDGCGHCAACNLRANGLNHYLSNKAAVMAAMKQKTGLR</sequence>
<evidence type="ECO:0000255" key="1">
    <source>
        <dbReference type="HAMAP-Rule" id="MF_01633"/>
    </source>
</evidence>
<organism>
    <name type="scientific">Salmonella gallinarum (strain 287/91 / NCTC 13346)</name>
    <dbReference type="NCBI Taxonomy" id="550538"/>
    <lineage>
        <taxon>Bacteria</taxon>
        <taxon>Pseudomonadati</taxon>
        <taxon>Pseudomonadota</taxon>
        <taxon>Gammaproteobacteria</taxon>
        <taxon>Enterobacterales</taxon>
        <taxon>Enterobacteriaceae</taxon>
        <taxon>Salmonella</taxon>
    </lineage>
</organism>
<keyword id="KW-0067">ATP-binding</keyword>
<keyword id="KW-0436">Ligase</keyword>
<keyword id="KW-0479">Metal-binding</keyword>
<keyword id="KW-0547">Nucleotide-binding</keyword>
<keyword id="KW-0671">Queuosine biosynthesis</keyword>
<keyword id="KW-0862">Zinc</keyword>
<feature type="chain" id="PRO_1000186630" description="7-cyano-7-deazaguanine synthase">
    <location>
        <begin position="1"/>
        <end position="231"/>
    </location>
</feature>
<feature type="binding site" evidence="1">
    <location>
        <begin position="8"/>
        <end position="18"/>
    </location>
    <ligand>
        <name>ATP</name>
        <dbReference type="ChEBI" id="CHEBI:30616"/>
    </ligand>
</feature>
<feature type="binding site" evidence="1">
    <location>
        <position position="188"/>
    </location>
    <ligand>
        <name>Zn(2+)</name>
        <dbReference type="ChEBI" id="CHEBI:29105"/>
    </ligand>
</feature>
<feature type="binding site" evidence="1">
    <location>
        <position position="197"/>
    </location>
    <ligand>
        <name>Zn(2+)</name>
        <dbReference type="ChEBI" id="CHEBI:29105"/>
    </ligand>
</feature>
<feature type="binding site" evidence="1">
    <location>
        <position position="200"/>
    </location>
    <ligand>
        <name>Zn(2+)</name>
        <dbReference type="ChEBI" id="CHEBI:29105"/>
    </ligand>
</feature>
<feature type="binding site" evidence="1">
    <location>
        <position position="203"/>
    </location>
    <ligand>
        <name>Zn(2+)</name>
        <dbReference type="ChEBI" id="CHEBI:29105"/>
    </ligand>
</feature>
<accession>B5R6V6</accession>
<name>QUEC_SALG2</name>